<keyword id="KW-0025">Alternative splicing</keyword>
<keyword id="KW-0053">Apoptosis</keyword>
<keyword id="KW-0175">Coiled coil</keyword>
<keyword id="KW-0256">Endoplasmic reticulum</keyword>
<keyword id="KW-0931">ER-Golgi transport</keyword>
<keyword id="KW-0945">Host-virus interaction</keyword>
<keyword id="KW-0472">Membrane</keyword>
<keyword id="KW-0496">Mitochondrion</keyword>
<keyword id="KW-1267">Proteomics identification</keyword>
<keyword id="KW-1185">Reference proteome</keyword>
<keyword id="KW-0812">Transmembrane</keyword>
<keyword id="KW-1133">Transmembrane helix</keyword>
<keyword id="KW-0813">Transport</keyword>
<keyword id="KW-0832">Ubl conjugation</keyword>
<accession>Q12981</accession>
<accession>D3DQM3</accession>
<accession>D3DQM4</accession>
<accession>D3DQM5</accession>
<accession>D3DQM6</accession>
<accession>O75622</accession>
<accession>O75623</accession>
<accession>O75624</accession>
<accession>Q6K044</accession>
<accession>Q96FG4</accession>
<name>SEC20_HUMAN</name>
<dbReference type="EMBL" id="U15172">
    <property type="protein sequence ID" value="AAC00020.1"/>
    <property type="molecule type" value="mRNA"/>
</dbReference>
<dbReference type="EMBL" id="AF083956">
    <property type="protein sequence ID" value="AAC33124.1"/>
    <property type="molecule type" value="mRNA"/>
</dbReference>
<dbReference type="EMBL" id="AF083957">
    <property type="protein sequence ID" value="AAC33125.1"/>
    <property type="molecule type" value="mRNA"/>
</dbReference>
<dbReference type="EMBL" id="AF083958">
    <property type="protein sequence ID" value="AAC33126.1"/>
    <property type="molecule type" value="mRNA"/>
</dbReference>
<dbReference type="EMBL" id="AY216799">
    <property type="protein sequence ID" value="AAO91805.1"/>
    <property type="molecule type" value="mRNA"/>
</dbReference>
<dbReference type="EMBL" id="AY246554">
    <property type="protein sequence ID" value="AAO61090.1"/>
    <property type="molecule type" value="Genomic_DNA"/>
</dbReference>
<dbReference type="EMBL" id="CH471062">
    <property type="protein sequence ID" value="EAW61405.1"/>
    <property type="molecule type" value="Genomic_DNA"/>
</dbReference>
<dbReference type="EMBL" id="CH471062">
    <property type="protein sequence ID" value="EAW61406.1"/>
    <property type="molecule type" value="Genomic_DNA"/>
</dbReference>
<dbReference type="EMBL" id="CH471062">
    <property type="protein sequence ID" value="EAW61408.1"/>
    <property type="molecule type" value="Genomic_DNA"/>
</dbReference>
<dbReference type="EMBL" id="CH471062">
    <property type="protein sequence ID" value="EAW61409.1"/>
    <property type="molecule type" value="Genomic_DNA"/>
</dbReference>
<dbReference type="EMBL" id="CH471062">
    <property type="protein sequence ID" value="EAW61410.1"/>
    <property type="molecule type" value="Genomic_DNA"/>
</dbReference>
<dbReference type="EMBL" id="CH471062">
    <property type="protein sequence ID" value="EAW61411.1"/>
    <property type="molecule type" value="Genomic_DNA"/>
</dbReference>
<dbReference type="EMBL" id="CH471062">
    <property type="protein sequence ID" value="EAW61412.1"/>
    <property type="molecule type" value="Genomic_DNA"/>
</dbReference>
<dbReference type="EMBL" id="CH471062">
    <property type="protein sequence ID" value="EAW61413.1"/>
    <property type="molecule type" value="Genomic_DNA"/>
</dbReference>
<dbReference type="EMBL" id="BC010959">
    <property type="protein sequence ID" value="AAH10959.1"/>
    <property type="molecule type" value="mRNA"/>
</dbReference>
<dbReference type="CCDS" id="CCDS43400.1">
    <molecule id="Q12981-2"/>
</dbReference>
<dbReference type="CCDS" id="CCDS4384.1">
    <molecule id="Q12981-4"/>
</dbReference>
<dbReference type="CCDS" id="CCDS4385.1">
    <molecule id="Q12981-1"/>
</dbReference>
<dbReference type="CCDS" id="CCDS4386.1">
    <molecule id="Q12981-3"/>
</dbReference>
<dbReference type="PIR" id="I38863">
    <property type="entry name" value="I38863"/>
</dbReference>
<dbReference type="RefSeq" id="NP_001196.2">
    <molecule id="Q12981-4"/>
    <property type="nucleotide sequence ID" value="NM_001205.3"/>
</dbReference>
<dbReference type="RefSeq" id="NP_053581.2">
    <molecule id="Q12981-2"/>
    <property type="nucleotide sequence ID" value="NM_013978.3"/>
</dbReference>
<dbReference type="RefSeq" id="NP_053582.2">
    <molecule id="Q12981-1"/>
    <property type="nucleotide sequence ID" value="NM_013979.3"/>
</dbReference>
<dbReference type="RefSeq" id="NP_053583.2">
    <molecule id="Q12981-3"/>
    <property type="nucleotide sequence ID" value="NM_013980.3"/>
</dbReference>
<dbReference type="SMR" id="Q12981"/>
<dbReference type="BioGRID" id="107130">
    <property type="interactions" value="147"/>
</dbReference>
<dbReference type="FunCoup" id="Q12981">
    <property type="interactions" value="2974"/>
</dbReference>
<dbReference type="IntAct" id="Q12981">
    <property type="interactions" value="89"/>
</dbReference>
<dbReference type="MINT" id="Q12981"/>
<dbReference type="STRING" id="9606.ENSP00000231668"/>
<dbReference type="GlyGen" id="Q12981">
    <property type="glycosylation" value="1 site, 1 O-linked glycan (1 site)"/>
</dbReference>
<dbReference type="iPTMnet" id="Q12981"/>
<dbReference type="MetOSite" id="Q12981"/>
<dbReference type="PhosphoSitePlus" id="Q12981"/>
<dbReference type="SwissPalm" id="Q12981"/>
<dbReference type="BioMuta" id="BNIP1"/>
<dbReference type="DMDM" id="93141310"/>
<dbReference type="jPOST" id="Q12981"/>
<dbReference type="MassIVE" id="Q12981"/>
<dbReference type="PeptideAtlas" id="Q12981"/>
<dbReference type="ProteomicsDB" id="59075">
    <molecule id="Q12981-4"/>
</dbReference>
<dbReference type="ProteomicsDB" id="59076">
    <molecule id="Q12981-1"/>
</dbReference>
<dbReference type="ProteomicsDB" id="59077">
    <molecule id="Q12981-2"/>
</dbReference>
<dbReference type="ProteomicsDB" id="59078">
    <molecule id="Q12981-3"/>
</dbReference>
<dbReference type="Pumba" id="Q12981"/>
<dbReference type="Antibodypedia" id="2356">
    <property type="antibodies" value="546 antibodies from 35 providers"/>
</dbReference>
<dbReference type="DNASU" id="662"/>
<dbReference type="Ensembl" id="ENST00000231668.13">
    <molecule id="Q12981-1"/>
    <property type="protein sequence ID" value="ENSP00000231668.9"/>
    <property type="gene ID" value="ENSG00000113734.18"/>
</dbReference>
<dbReference type="Ensembl" id="ENST00000351486.10">
    <molecule id="Q12981-4"/>
    <property type="protein sequence ID" value="ENSP00000239215.7"/>
    <property type="gene ID" value="ENSG00000113734.18"/>
</dbReference>
<dbReference type="Ensembl" id="ENST00000352523.10">
    <molecule id="Q12981-3"/>
    <property type="protein sequence ID" value="ENSP00000239214.8"/>
    <property type="gene ID" value="ENSG00000113734.18"/>
</dbReference>
<dbReference type="Ensembl" id="ENST00000393770.4">
    <molecule id="Q12981-2"/>
    <property type="protein sequence ID" value="ENSP00000377365.4"/>
    <property type="gene ID" value="ENSG00000113734.18"/>
</dbReference>
<dbReference type="GeneID" id="662"/>
<dbReference type="KEGG" id="hsa:662"/>
<dbReference type="MANE-Select" id="ENST00000351486.10">
    <property type="protein sequence ID" value="ENSP00000239215.7"/>
    <property type="RefSeq nucleotide sequence ID" value="NM_001205.3"/>
    <property type="RefSeq protein sequence ID" value="NP_001196.2"/>
</dbReference>
<dbReference type="UCSC" id="uc003mci.5">
    <molecule id="Q12981-4"/>
    <property type="organism name" value="human"/>
</dbReference>
<dbReference type="AGR" id="HGNC:1082"/>
<dbReference type="CTD" id="662"/>
<dbReference type="DisGeNET" id="662"/>
<dbReference type="GeneCards" id="BNIP1"/>
<dbReference type="HGNC" id="HGNC:1082">
    <property type="gene designation" value="BNIP1"/>
</dbReference>
<dbReference type="HPA" id="ENSG00000113734">
    <property type="expression patterns" value="Low tissue specificity"/>
</dbReference>
<dbReference type="MIM" id="603291">
    <property type="type" value="gene"/>
</dbReference>
<dbReference type="neXtProt" id="NX_Q12981"/>
<dbReference type="OpenTargets" id="ENSG00000113734"/>
<dbReference type="PharmGKB" id="PA25392"/>
<dbReference type="VEuPathDB" id="HostDB:ENSG00000113734"/>
<dbReference type="GeneTree" id="ENSGT00390000014412"/>
<dbReference type="HOGENOM" id="CLU_105902_0_0_1"/>
<dbReference type="InParanoid" id="Q12981"/>
<dbReference type="OMA" id="TEVDTHR"/>
<dbReference type="OrthoDB" id="46868at2759"/>
<dbReference type="PAN-GO" id="Q12981">
    <property type="GO annotations" value="3 GO annotations based on evolutionary models"/>
</dbReference>
<dbReference type="PhylomeDB" id="Q12981"/>
<dbReference type="TreeFam" id="TF324339"/>
<dbReference type="PathwayCommons" id="Q12981"/>
<dbReference type="Reactome" id="R-HSA-6811434">
    <property type="pathway name" value="COPI-dependent Golgi-to-ER retrograde traffic"/>
</dbReference>
<dbReference type="SignaLink" id="Q12981"/>
<dbReference type="SIGNOR" id="Q12981"/>
<dbReference type="BioGRID-ORCS" id="662">
    <property type="hits" value="407 hits in 1158 CRISPR screens"/>
</dbReference>
<dbReference type="ChiTaRS" id="BNIP1">
    <property type="organism name" value="human"/>
</dbReference>
<dbReference type="GenomeRNAi" id="662"/>
<dbReference type="Pharos" id="Q12981">
    <property type="development level" value="Tbio"/>
</dbReference>
<dbReference type="PRO" id="PR:Q12981"/>
<dbReference type="Proteomes" id="UP000005640">
    <property type="component" value="Chromosome 5"/>
</dbReference>
<dbReference type="RNAct" id="Q12981">
    <property type="molecule type" value="protein"/>
</dbReference>
<dbReference type="Bgee" id="ENSG00000113734">
    <property type="expression patterns" value="Expressed in secondary oocyte and 155 other cell types or tissues"/>
</dbReference>
<dbReference type="ExpressionAtlas" id="Q12981">
    <property type="expression patterns" value="baseline and differential"/>
</dbReference>
<dbReference type="GO" id="GO:0030137">
    <property type="term" value="C:COPI-coated vesicle"/>
    <property type="evidence" value="ECO:0007669"/>
    <property type="project" value="Ensembl"/>
</dbReference>
<dbReference type="GO" id="GO:0005737">
    <property type="term" value="C:cytoplasm"/>
    <property type="evidence" value="ECO:0000314"/>
    <property type="project" value="MGI"/>
</dbReference>
<dbReference type="GO" id="GO:0005783">
    <property type="term" value="C:endoplasmic reticulum"/>
    <property type="evidence" value="ECO:0000314"/>
    <property type="project" value="HGNC-UCL"/>
</dbReference>
<dbReference type="GO" id="GO:0005789">
    <property type="term" value="C:endoplasmic reticulum membrane"/>
    <property type="evidence" value="ECO:0000314"/>
    <property type="project" value="UniProtKB"/>
</dbReference>
<dbReference type="GO" id="GO:0043231">
    <property type="term" value="C:intracellular membrane-bounded organelle"/>
    <property type="evidence" value="ECO:0000314"/>
    <property type="project" value="UniProtKB"/>
</dbReference>
<dbReference type="GO" id="GO:0031966">
    <property type="term" value="C:mitochondrial membrane"/>
    <property type="evidence" value="ECO:0000314"/>
    <property type="project" value="UniProtKB"/>
</dbReference>
<dbReference type="GO" id="GO:0005741">
    <property type="term" value="C:mitochondrial outer membrane"/>
    <property type="evidence" value="ECO:0000314"/>
    <property type="project" value="UniProt"/>
</dbReference>
<dbReference type="GO" id="GO:0005635">
    <property type="term" value="C:nuclear envelope"/>
    <property type="evidence" value="ECO:0000314"/>
    <property type="project" value="UniProtKB"/>
</dbReference>
<dbReference type="GO" id="GO:0031201">
    <property type="term" value="C:SNARE complex"/>
    <property type="evidence" value="ECO:0000314"/>
    <property type="project" value="HGNC-UCL"/>
</dbReference>
<dbReference type="GO" id="GO:0048763">
    <property type="term" value="F:calcium-induced calcium release activity"/>
    <property type="evidence" value="ECO:0000314"/>
    <property type="project" value="UniProt"/>
</dbReference>
<dbReference type="GO" id="GO:0005484">
    <property type="term" value="F:SNAP receptor activity"/>
    <property type="evidence" value="ECO:0000314"/>
    <property type="project" value="FlyBase"/>
</dbReference>
<dbReference type="GO" id="GO:0006915">
    <property type="term" value="P:apoptotic process"/>
    <property type="evidence" value="ECO:0000353"/>
    <property type="project" value="MGI"/>
</dbReference>
<dbReference type="GO" id="GO:0140208">
    <property type="term" value="P:apoptotic process in response to mitochondrial fragmentation"/>
    <property type="evidence" value="ECO:0000314"/>
    <property type="project" value="UniProt"/>
</dbReference>
<dbReference type="GO" id="GO:0016320">
    <property type="term" value="P:endoplasmic reticulum membrane fusion"/>
    <property type="evidence" value="ECO:0000315"/>
    <property type="project" value="HGNC-UCL"/>
</dbReference>
<dbReference type="GO" id="GO:0007029">
    <property type="term" value="P:endoplasmic reticulum organization"/>
    <property type="evidence" value="ECO:0000315"/>
    <property type="project" value="HGNC-UCL"/>
</dbReference>
<dbReference type="GO" id="GO:0097194">
    <property type="term" value="P:execution phase of apoptosis"/>
    <property type="evidence" value="ECO:0000305"/>
    <property type="project" value="BHF-UCL"/>
</dbReference>
<dbReference type="GO" id="GO:0043066">
    <property type="term" value="P:negative regulation of apoptotic process"/>
    <property type="evidence" value="ECO:0000304"/>
    <property type="project" value="UniProtKB"/>
</dbReference>
<dbReference type="GO" id="GO:0014823">
    <property type="term" value="P:response to activity"/>
    <property type="evidence" value="ECO:0007669"/>
    <property type="project" value="Ensembl"/>
</dbReference>
<dbReference type="GO" id="GO:0090649">
    <property type="term" value="P:response to oxygen-glucose deprivation"/>
    <property type="evidence" value="ECO:0007669"/>
    <property type="project" value="Ensembl"/>
</dbReference>
<dbReference type="GO" id="GO:0042594">
    <property type="term" value="P:response to starvation"/>
    <property type="evidence" value="ECO:0007669"/>
    <property type="project" value="Ensembl"/>
</dbReference>
<dbReference type="GO" id="GO:0006890">
    <property type="term" value="P:retrograde vesicle-mediated transport, Golgi to endoplasmic reticulum"/>
    <property type="evidence" value="ECO:0000318"/>
    <property type="project" value="GO_Central"/>
</dbReference>
<dbReference type="CDD" id="cd15865">
    <property type="entry name" value="SNARE_SEC20"/>
    <property type="match status" value="1"/>
</dbReference>
<dbReference type="InterPro" id="IPR005606">
    <property type="entry name" value="Sec20"/>
</dbReference>
<dbReference type="InterPro" id="IPR056173">
    <property type="entry name" value="Sec20_C"/>
</dbReference>
<dbReference type="PANTHER" id="PTHR12825">
    <property type="entry name" value="BNIP1-RELATED"/>
    <property type="match status" value="1"/>
</dbReference>
<dbReference type="PANTHER" id="PTHR12825:SF0">
    <property type="entry name" value="VESICLE TRANSPORT PROTEIN SEC20"/>
    <property type="match status" value="1"/>
</dbReference>
<dbReference type="Pfam" id="PF03908">
    <property type="entry name" value="Sec20"/>
    <property type="match status" value="1"/>
</dbReference>
<organism>
    <name type="scientific">Homo sapiens</name>
    <name type="common">Human</name>
    <dbReference type="NCBI Taxonomy" id="9606"/>
    <lineage>
        <taxon>Eukaryota</taxon>
        <taxon>Metazoa</taxon>
        <taxon>Chordata</taxon>
        <taxon>Craniata</taxon>
        <taxon>Vertebrata</taxon>
        <taxon>Euteleostomi</taxon>
        <taxon>Mammalia</taxon>
        <taxon>Eutheria</taxon>
        <taxon>Euarchontoglires</taxon>
        <taxon>Primates</taxon>
        <taxon>Haplorrhini</taxon>
        <taxon>Catarrhini</taxon>
        <taxon>Hominidae</taxon>
        <taxon>Homo</taxon>
    </lineage>
</organism>
<feature type="chain" id="PRO_0000064960" description="Vesicle transport protein SEC20">
    <location>
        <begin position="1"/>
        <end position="228"/>
    </location>
</feature>
<feature type="topological domain" description="Cytoplasmic" evidence="1">
    <location>
        <begin position="1"/>
        <end position="199"/>
    </location>
</feature>
<feature type="transmembrane region" description="Helical; Anchor for type IV membrane protein" evidence="1">
    <location>
        <begin position="200"/>
        <end position="220"/>
    </location>
</feature>
<feature type="topological domain" description="Lumenal" evidence="1">
    <location>
        <begin position="221"/>
        <end position="228"/>
    </location>
</feature>
<feature type="coiled-coil region" evidence="1">
    <location>
        <begin position="37"/>
        <end position="90"/>
    </location>
</feature>
<feature type="splice variant" id="VSP_017901" description="In isoform 3 and isoform 4." evidence="8">
    <original>Q</original>
    <variation>QPVLYQRAFIWTASTFFFKLTYSLTDFSSTQHDFNSPTTPVTFS</variation>
    <location>
        <position position="59"/>
    </location>
</feature>
<feature type="splice variant" id="VSP_004330" description="In isoform 2 and isoform 4." evidence="8">
    <location>
        <begin position="90"/>
        <end position="123"/>
    </location>
</feature>
<feature type="sequence variant" id="VAR_019169" description="In dbSNP:rs5745100." evidence="7">
    <original>Q</original>
    <variation>H</variation>
    <location>
        <position position="14"/>
    </location>
</feature>
<feature type="mutagenesis site" description="Loss of proapoptotic effect. No effect on interaction with RINT1." evidence="3">
    <original>L</original>
    <variation>A</variation>
    <location>
        <position position="114"/>
    </location>
</feature>
<feature type="sequence conflict" description="In Ref. 3; AAO91805." evidence="9" ref="3">
    <original>Q</original>
    <variation>R</variation>
    <location>
        <position position="14"/>
    </location>
</feature>
<feature type="sequence conflict" description="In Ref. 3; AAO91805." evidence="9" ref="3">
    <original>K</original>
    <variation>E</variation>
    <location>
        <position position="66"/>
    </location>
</feature>
<feature type="sequence conflict" description="In Ref. 1 and 2." evidence="9" ref="1 2">
    <original>A</original>
    <variation>R</variation>
    <location>
        <position position="210"/>
    </location>
</feature>
<sequence length="228" mass="26132">MAAPQDVHVRICNQEIVKFDLEVKALIQDIRDCSGPLSALTELNTKVKEKFQQLRHRIQDLEQLAKEQDKESEKQLLLQEVENHKKQMLSNQASWRKANLTCKIAIDNLEKAELLQGGDLLRQRKTTKESLAQTSSTITESLMGISRMMAQQVQQSEEAMQSLVTSSRTILDANEEFKSMSGTIQLGRKLITKYNRRELTDKLLIFLALALFLATVLYIVKKRLFPFL</sequence>
<protein>
    <recommendedName>
        <fullName>Vesicle transport protein SEC20</fullName>
    </recommendedName>
    <alternativeName>
        <fullName>BCL2/adenovirus E1B 19 kDa protein-interacting protein 1</fullName>
    </alternativeName>
    <alternativeName>
        <fullName>Transformation-related gene 8 protein</fullName>
        <shortName>TRG-8</shortName>
    </alternativeName>
</protein>
<reference key="1">
    <citation type="journal article" date="1994" name="Cell">
        <title>Adenovirus E1B 19 kDa and Bcl-2 proteins interact with a common set of cellular proteins.</title>
        <authorList>
            <person name="Boyd J.M."/>
            <person name="Malstrom S."/>
            <person name="Subramanian T."/>
            <person name="Venkatesh L.K."/>
            <person name="Schaeper U."/>
            <person name="Elangovan B."/>
            <person name="D'Sa-Eipper C."/>
            <person name="Chinnadurai G."/>
        </authorList>
    </citation>
    <scope>NUCLEOTIDE SEQUENCE [MRNA] (ISOFORM 1)</scope>
    <scope>FUNCTION</scope>
    <scope>INTERACTION WITH BCL2</scope>
    <scope>INTERACTION WITH ADENOVIRUS PROTEIN E1B 19K (MICROBIAL INFECTION)</scope>
</reference>
<reference key="2">
    <citation type="journal article" date="1999" name="FEBS Lett.">
        <title>Novel BNIP1 variants and their interaction with BCL2 family members.</title>
        <authorList>
            <person name="Zhang H."/>
            <person name="Heim J."/>
            <person name="Meyhack B."/>
        </authorList>
    </citation>
    <scope>NUCLEOTIDE SEQUENCE [MRNA] (ISOFORMS 2; 3 AND 4)</scope>
    <scope>TISSUE SPECIFICITY</scope>
</reference>
<reference key="3">
    <citation type="submission" date="2003-01" db="EMBL/GenBank/DDBJ databases">
        <title>Identification of human transformation-related gene.</title>
        <authorList>
            <person name="Kim J.W."/>
        </authorList>
    </citation>
    <scope>NUCLEOTIDE SEQUENCE [LARGE SCALE MRNA]</scope>
</reference>
<reference key="4">
    <citation type="submission" date="2003-02" db="EMBL/GenBank/DDBJ databases">
        <authorList>
            <consortium name="NIEHS SNPs program"/>
        </authorList>
    </citation>
    <scope>NUCLEOTIDE SEQUENCE [GENOMIC DNA]</scope>
    <scope>VARIANT HIS-14</scope>
</reference>
<reference key="5">
    <citation type="submission" date="2005-09" db="EMBL/GenBank/DDBJ databases">
        <authorList>
            <person name="Mural R.J."/>
            <person name="Istrail S."/>
            <person name="Sutton G.G."/>
            <person name="Florea L."/>
            <person name="Halpern A.L."/>
            <person name="Mobarry C.M."/>
            <person name="Lippert R."/>
            <person name="Walenz B."/>
            <person name="Shatkay H."/>
            <person name="Dew I."/>
            <person name="Miller J.R."/>
            <person name="Flanigan M.J."/>
            <person name="Edwards N.J."/>
            <person name="Bolanos R."/>
            <person name="Fasulo D."/>
            <person name="Halldorsson B.V."/>
            <person name="Hannenhalli S."/>
            <person name="Turner R."/>
            <person name="Yooseph S."/>
            <person name="Lu F."/>
            <person name="Nusskern D.R."/>
            <person name="Shue B.C."/>
            <person name="Zheng X.H."/>
            <person name="Zhong F."/>
            <person name="Delcher A.L."/>
            <person name="Huson D.H."/>
            <person name="Kravitz S.A."/>
            <person name="Mouchard L."/>
            <person name="Reinert K."/>
            <person name="Remington K.A."/>
            <person name="Clark A.G."/>
            <person name="Waterman M.S."/>
            <person name="Eichler E.E."/>
            <person name="Adams M.D."/>
            <person name="Hunkapiller M.W."/>
            <person name="Myers E.W."/>
            <person name="Venter J.C."/>
        </authorList>
    </citation>
    <scope>NUCLEOTIDE SEQUENCE [LARGE SCALE GENOMIC DNA]</scope>
</reference>
<reference key="6">
    <citation type="journal article" date="2004" name="Genome Res.">
        <title>The status, quality, and expansion of the NIH full-length cDNA project: the Mammalian Gene Collection (MGC).</title>
        <authorList>
            <consortium name="The MGC Project Team"/>
        </authorList>
    </citation>
    <scope>NUCLEOTIDE SEQUENCE [LARGE SCALE MRNA] (ISOFORM 1)</scope>
    <source>
        <tissue>Kidney</tissue>
    </source>
</reference>
<reference key="7">
    <citation type="journal article" date="2004" name="EMBO J.">
        <title>Involvement of BNIP1 in apoptosis and endoplasmic reticulum membrane fusion.</title>
        <authorList>
            <person name="Nakajima K."/>
            <person name="Hirose H."/>
            <person name="Taniguchi M."/>
            <person name="Kurashina H."/>
            <person name="Arasaki K."/>
            <person name="Nagahama M."/>
            <person name="Tani K."/>
            <person name="Yamamoto A."/>
            <person name="Tagaya M."/>
        </authorList>
    </citation>
    <scope>FUNCTION</scope>
    <scope>INTERACTION WITH NAPA; RINT1; STX18; USE1L AND ZW10</scope>
    <scope>SUBCELLULAR LOCATION</scope>
    <scope>MUTAGENESIS OF LEU-114</scope>
</reference>
<reference key="8">
    <citation type="journal article" date="2011" name="BMC Syst. Biol.">
        <title>Initial characterization of the human central proteome.</title>
        <authorList>
            <person name="Burkard T.R."/>
            <person name="Planyavsky M."/>
            <person name="Kaupe I."/>
            <person name="Breitwieser F.P."/>
            <person name="Buerckstuemmer T."/>
            <person name="Bennett K.L."/>
            <person name="Superti-Furga G."/>
            <person name="Colinge J."/>
        </authorList>
    </citation>
    <scope>IDENTIFICATION BY MASS SPECTROMETRY [LARGE SCALE ANALYSIS]</scope>
</reference>
<reference key="9">
    <citation type="journal article" date="2011" name="PLoS ONE">
        <title>RNF185, a novel mitochondrial ubiquitin E3 ligase, regulates autophagy through interaction with BNIP1.</title>
        <authorList>
            <person name="Tang F."/>
            <person name="Wang B."/>
            <person name="Li N."/>
            <person name="Wu Y."/>
            <person name="Jia J."/>
            <person name="Suo T."/>
            <person name="Chen Q."/>
            <person name="Liu Y.J."/>
            <person name="Tang J."/>
        </authorList>
    </citation>
    <scope>FUNCTION IN AUTOPHAGY</scope>
    <scope>INTERACTION WITH RNF185 AND SQSTM1</scope>
    <scope>SUBCELLULAR LOCATION</scope>
    <scope>UBIQUITINATION BY RNF185</scope>
</reference>
<reference key="10">
    <citation type="journal article" date="2013" name="Cell. Signal.">
        <title>A novel RING finger E3 ligase RNF186 regulate ER stress-mediated apoptosis through interaction with BNip1.</title>
        <authorList>
            <person name="Wang P."/>
            <person name="Wu Y."/>
            <person name="Li Y."/>
            <person name="Zheng J."/>
            <person name="Tang J."/>
        </authorList>
    </citation>
    <scope>FUNCTION</scope>
    <scope>INTERACTION WITH RNF186</scope>
    <scope>SUBCELLULAR LOCATION</scope>
    <scope>UBIQUITINATION BY RNF186</scope>
</reference>
<reference key="11">
    <citation type="journal article" date="2014" name="J. Proteomics">
        <title>An enzyme assisted RP-RPLC approach for in-depth analysis of human liver phosphoproteome.</title>
        <authorList>
            <person name="Bian Y."/>
            <person name="Song C."/>
            <person name="Cheng K."/>
            <person name="Dong M."/>
            <person name="Wang F."/>
            <person name="Huang J."/>
            <person name="Sun D."/>
            <person name="Wang L."/>
            <person name="Ye M."/>
            <person name="Zou H."/>
        </authorList>
    </citation>
    <scope>IDENTIFICATION BY MASS SPECTROMETRY [LARGE SCALE ANALYSIS]</scope>
    <source>
        <tissue>Liver</tissue>
    </source>
</reference>
<reference key="12">
    <citation type="journal article" date="2015" name="Proteomics">
        <title>N-terminome analysis of the human mitochondrial proteome.</title>
        <authorList>
            <person name="Vaca Jacome A.S."/>
            <person name="Rabilloud T."/>
            <person name="Schaeffer-Reiss C."/>
            <person name="Rompais M."/>
            <person name="Ayoub D."/>
            <person name="Lane L."/>
            <person name="Bairoch A."/>
            <person name="Van Dorsselaer A."/>
            <person name="Carapito C."/>
        </authorList>
    </citation>
    <scope>IDENTIFICATION BY MASS SPECTROMETRY [LARGE SCALE ANALYSIS]</scope>
</reference>
<comment type="function">
    <text evidence="3 5 6 10">As part of a SNARE complex may be involved in endoplasmic reticulum membranes fusion and be required for the maintenance of endoplasmic reticulum organization (PubMed:15272311). Also plays a role in apoptosis (PubMed:15272311, PubMed:23896122, PubMed:7954800). It is for instance required for endoplasmic reticulum stress-induced apoptosis (PubMed:23896122). As a substrate of RNF185 interacting with SQSTM1, might also be involved in mitochondrial autophagy (Probable).</text>
</comment>
<comment type="subunit">
    <text evidence="3 4 5 6">Component of a SNARE complex consisting of STX18, USE1L, BNIP1/SEC20L and SEC22B (PubMed:15272311). Interacts directly with STX18, RINT1/TIP20L and NAPA (PubMed:15272311). Interacts with ZW10 through RINT1 (PubMed:15272311). Interacts with BCL2 (PubMed:7954800). Interacts with RNF186 (PubMed:23896122). Interacts with RNF185 (PubMed:21931693). Interacts with SQSTM1; increased by 'Lys-63'-linked polyubiquitination of BNIP1 (PubMed:21931693).</text>
</comment>
<comment type="subunit">
    <text evidence="6">(Microbial infection) Interacts with adenovirus E1B 19K protein; plays a role in the suppression of cell apoptosis by the viral protein.</text>
</comment>
<comment type="interaction">
    <interactant intactId="EBI-4402847">
        <id>Q12981</id>
    </interactant>
    <interactant intactId="EBI-8646596">
        <id>P49447</id>
        <label>CYB561</label>
    </interactant>
    <organismsDiffer>false</organismsDiffer>
    <experiments>3</experiments>
</comment>
<comment type="interaction">
    <interactant intactId="EBI-4402847">
        <id>Q12981</id>
    </interactant>
    <interactant intactId="EBI-18535450">
        <id>Q9GZR5</id>
        <label>ELOVL4</label>
    </interactant>
    <organismsDiffer>false</organismsDiffer>
    <experiments>3</experiments>
</comment>
<comment type="interaction">
    <interactant intactId="EBI-4402847">
        <id>Q12981</id>
    </interactant>
    <interactant intactId="EBI-18636064">
        <id>Q8TBP5</id>
        <label>FAM174A</label>
    </interactant>
    <organismsDiffer>false</organismsDiffer>
    <experiments>3</experiments>
</comment>
<comment type="interaction">
    <interactant intactId="EBI-4402847">
        <id>Q12981</id>
    </interactant>
    <interactant intactId="EBI-1052304">
        <id>Q8NBQ5</id>
        <label>HSD17B11</label>
    </interactant>
    <organismsDiffer>false</organismsDiffer>
    <experiments>3</experiments>
</comment>
<comment type="interaction">
    <interactant intactId="EBI-4402847">
        <id>Q12981</id>
    </interactant>
    <interactant intactId="EBI-10266796">
        <id>Q8N5M9</id>
        <label>JAGN1</label>
    </interactant>
    <organismsDiffer>false</organismsDiffer>
    <experiments>3</experiments>
</comment>
<comment type="interaction">
    <interactant intactId="EBI-4402847">
        <id>Q12981</id>
    </interactant>
    <interactant intactId="EBI-2341610">
        <id>Q9NX47</id>
        <label>MARCHF5</label>
    </interactant>
    <organismsDiffer>false</organismsDiffer>
    <experiments>3</experiments>
</comment>
<comment type="interaction">
    <interactant intactId="EBI-4402847">
        <id>Q12981</id>
    </interactant>
    <interactant intactId="EBI-10192441">
        <id>Q86VR2</id>
        <label>RETREG3</label>
    </interactant>
    <organismsDiffer>false</organismsDiffer>
    <experiments>3</experiments>
</comment>
<comment type="interaction">
    <interactant intactId="EBI-4402847">
        <id>Q12981</id>
    </interactant>
    <interactant intactId="EBI-17247926">
        <id>Q9NY72</id>
        <label>SCN3B</label>
    </interactant>
    <organismsDiffer>false</organismsDiffer>
    <experiments>3</experiments>
</comment>
<comment type="interaction">
    <interactant intactId="EBI-4402847">
        <id>Q12981</id>
    </interactant>
    <interactant intactId="EBI-5235586">
        <id>Q8TBB6</id>
        <label>SLC7A14</label>
    </interactant>
    <organismsDiffer>false</organismsDiffer>
    <experiments>3</experiments>
</comment>
<comment type="interaction">
    <interactant intactId="EBI-4402847">
        <id>Q12981</id>
    </interactant>
    <interactant intactId="EBI-1211440">
        <id>P27105</id>
        <label>STOM</label>
    </interactant>
    <organismsDiffer>false</organismsDiffer>
    <experiments>3</experiments>
</comment>
<comment type="interaction">
    <interactant intactId="EBI-4402847">
        <id>Q12981</id>
    </interactant>
    <interactant intactId="EBI-712466">
        <id>Q16623</id>
        <label>STX1A</label>
    </interactant>
    <organismsDiffer>false</organismsDiffer>
    <experiments>3</experiments>
</comment>
<comment type="interaction">
    <interactant intactId="EBI-4402847">
        <id>Q12981</id>
    </interactant>
    <interactant intactId="EBI-6448756">
        <id>Q96DZ7</id>
        <label>TM4SF19</label>
    </interactant>
    <organismsDiffer>false</organismsDiffer>
    <experiments>3</experiments>
</comment>
<comment type="interaction">
    <interactant intactId="EBI-4402847">
        <id>Q12981</id>
    </interactant>
    <interactant intactId="EBI-6447886">
        <id>Q9Y320</id>
        <label>TMX2</label>
    </interactant>
    <organismsDiffer>false</organismsDiffer>
    <experiments>3</experiments>
</comment>
<comment type="interaction">
    <interactant intactId="EBI-4402847">
        <id>Q12981</id>
    </interactant>
    <interactant intactId="EBI-1055364">
        <id>Q3ZAQ7</id>
        <label>VMA21</label>
    </interactant>
    <organismsDiffer>false</organismsDiffer>
    <experiments>3</experiments>
</comment>
<comment type="subcellular location">
    <subcellularLocation>
        <location evidence="3 5">Endoplasmic reticulum membrane</location>
        <topology evidence="1">Single-pass type IV membrane protein</topology>
    </subcellularLocation>
    <subcellularLocation>
        <location evidence="4 5">Mitochondrion membrane</location>
        <topology evidence="1">Single-pass type IV membrane protein</topology>
    </subcellularLocation>
    <text evidence="5">Localization to the mitochondrion is regulated by RNF186.</text>
</comment>
<comment type="alternative products">
    <event type="alternative splicing"/>
    <isoform>
        <id>Q12981-4</id>
        <name>1</name>
        <name>BNIP1</name>
        <name>S4</name>
        <sequence type="displayed"/>
    </isoform>
    <isoform>
        <id>Q12981-2</id>
        <name>2</name>
        <name>BNIP1-a</name>
        <name>S1</name>
        <sequence type="described" ref="VSP_004330"/>
    </isoform>
    <isoform>
        <id>Q12981-1</id>
        <name>3</name>
        <name>BNIP1-b</name>
        <name>S2</name>
        <sequence type="described" ref="VSP_017901"/>
    </isoform>
    <isoform>
        <id>Q12981-3</id>
        <name>4</name>
        <name>BNIP1-c</name>
        <name>S3</name>
        <sequence type="described" ref="VSP_017901 VSP_004330"/>
    </isoform>
    <text>Additional isoforms seem to exist.</text>
</comment>
<comment type="tissue specificity">
    <text evidence="2">Isoform 1 is highly expressed in heart, brain, liver skeletal muscle and pancreas. Isoform 3 is moderately expressed in placenta, lung and kidney. Isoform 4 is highly expressed in testis and small intestine.</text>
</comment>
<comment type="PTM">
    <text evidence="4 5">Polyubiquitinated (PubMed:21931693, PubMed:23896122). 'Lys-63'-linked polyubiquitination by RNF185 increases the interaction with the autophagy receptor SQSTM1 (PubMed:21931693). Undergoes 'Lys-29'- and 'Lys-63'-linked polyubiquitination by RNF186 that may regulate BNIP1 localization to the mitochondrion (PubMed:23896122).</text>
</comment>
<comment type="similarity">
    <text evidence="9">Belongs to the SEC20 family.</text>
</comment>
<proteinExistence type="evidence at protein level"/>
<evidence type="ECO:0000255" key="1"/>
<evidence type="ECO:0000269" key="2">
    <source>
    </source>
</evidence>
<evidence type="ECO:0000269" key="3">
    <source>
    </source>
</evidence>
<evidence type="ECO:0000269" key="4">
    <source>
    </source>
</evidence>
<evidence type="ECO:0000269" key="5">
    <source>
    </source>
</evidence>
<evidence type="ECO:0000269" key="6">
    <source>
    </source>
</evidence>
<evidence type="ECO:0000269" key="7">
    <source ref="4"/>
</evidence>
<evidence type="ECO:0000303" key="8">
    <source>
    </source>
</evidence>
<evidence type="ECO:0000305" key="9"/>
<evidence type="ECO:0000305" key="10">
    <source>
    </source>
</evidence>
<gene>
    <name type="primary">BNIP1</name>
    <name type="synonym">NIP1</name>
    <name type="synonym">SEC20L</name>
    <name type="ORF">TRG8</name>
</gene>